<protein>
    <recommendedName>
        <fullName evidence="1">Ribosomal RNA large subunit methyltransferase H</fullName>
        <ecNumber evidence="1">2.1.1.177</ecNumber>
    </recommendedName>
    <alternativeName>
        <fullName evidence="1">23S rRNA (pseudouridine1915-N3)-methyltransferase</fullName>
    </alternativeName>
    <alternativeName>
        <fullName evidence="1">23S rRNA m3Psi1915 methyltransferase</fullName>
    </alternativeName>
    <alternativeName>
        <fullName evidence="1">rRNA (pseudouridine-N3-)-methyltransferase RlmH</fullName>
    </alternativeName>
</protein>
<sequence>MNITIICVGKLKEKYLKLAIDEYSKRLSRYCKLNIVELNDEKTPDNASEKDELIIKQKEGSKILAHVKENMYVIALDLNGKMASSEELAELIGDLGLKGKSNIALVIGGSLGLSKEVLNRANYKLSFSKMTFPHQLMRVILLEQIYRAYKINAGEPYHK</sequence>
<evidence type="ECO:0000255" key="1">
    <source>
        <dbReference type="HAMAP-Rule" id="MF_00658"/>
    </source>
</evidence>
<reference key="1">
    <citation type="journal article" date="2006" name="Nat. Biotechnol.">
        <title>The genome and transcriptomes of the anti-tumor agent Clostridium novyi-NT.</title>
        <authorList>
            <person name="Bettegowda C."/>
            <person name="Huang X."/>
            <person name="Lin J."/>
            <person name="Cheong I."/>
            <person name="Kohli M."/>
            <person name="Szabo S.A."/>
            <person name="Zhang X."/>
            <person name="Diaz L.A. Jr."/>
            <person name="Velculescu V.E."/>
            <person name="Parmigiani G."/>
            <person name="Kinzler K.W."/>
            <person name="Vogelstein B."/>
            <person name="Zhou S."/>
        </authorList>
    </citation>
    <scope>NUCLEOTIDE SEQUENCE [LARGE SCALE GENOMIC DNA]</scope>
    <source>
        <strain>NT</strain>
    </source>
</reference>
<comment type="function">
    <text evidence="1">Specifically methylates the pseudouridine at position 1915 (m3Psi1915) in 23S rRNA.</text>
</comment>
<comment type="catalytic activity">
    <reaction evidence="1">
        <text>pseudouridine(1915) in 23S rRNA + S-adenosyl-L-methionine = N(3)-methylpseudouridine(1915) in 23S rRNA + S-adenosyl-L-homocysteine + H(+)</text>
        <dbReference type="Rhea" id="RHEA:42752"/>
        <dbReference type="Rhea" id="RHEA-COMP:10221"/>
        <dbReference type="Rhea" id="RHEA-COMP:10222"/>
        <dbReference type="ChEBI" id="CHEBI:15378"/>
        <dbReference type="ChEBI" id="CHEBI:57856"/>
        <dbReference type="ChEBI" id="CHEBI:59789"/>
        <dbReference type="ChEBI" id="CHEBI:65314"/>
        <dbReference type="ChEBI" id="CHEBI:74486"/>
        <dbReference type="EC" id="2.1.1.177"/>
    </reaction>
</comment>
<comment type="subunit">
    <text evidence="1">Homodimer.</text>
</comment>
<comment type="subcellular location">
    <subcellularLocation>
        <location evidence="1">Cytoplasm</location>
    </subcellularLocation>
</comment>
<comment type="similarity">
    <text evidence="1">Belongs to the RNA methyltransferase RlmH family.</text>
</comment>
<accession>A0PXE8</accession>
<dbReference type="EC" id="2.1.1.177" evidence="1"/>
<dbReference type="EMBL" id="CP000382">
    <property type="protein sequence ID" value="ABK61905.1"/>
    <property type="molecule type" value="Genomic_DNA"/>
</dbReference>
<dbReference type="RefSeq" id="WP_011721071.1">
    <property type="nucleotide sequence ID" value="NC_008593.1"/>
</dbReference>
<dbReference type="SMR" id="A0PXE8"/>
<dbReference type="STRING" id="386415.NT01CX_0953"/>
<dbReference type="KEGG" id="cno:NT01CX_0953"/>
<dbReference type="eggNOG" id="COG1576">
    <property type="taxonomic scope" value="Bacteria"/>
</dbReference>
<dbReference type="HOGENOM" id="CLU_100552_0_0_9"/>
<dbReference type="Proteomes" id="UP000008220">
    <property type="component" value="Chromosome"/>
</dbReference>
<dbReference type="GO" id="GO:0005737">
    <property type="term" value="C:cytoplasm"/>
    <property type="evidence" value="ECO:0007669"/>
    <property type="project" value="UniProtKB-SubCell"/>
</dbReference>
<dbReference type="GO" id="GO:0070038">
    <property type="term" value="F:rRNA (pseudouridine-N3-)-methyltransferase activity"/>
    <property type="evidence" value="ECO:0007669"/>
    <property type="project" value="UniProtKB-UniRule"/>
</dbReference>
<dbReference type="CDD" id="cd18081">
    <property type="entry name" value="RlmH-like"/>
    <property type="match status" value="1"/>
</dbReference>
<dbReference type="Gene3D" id="3.40.1280.10">
    <property type="match status" value="1"/>
</dbReference>
<dbReference type="HAMAP" id="MF_00658">
    <property type="entry name" value="23SrRNA_methyltr_H"/>
    <property type="match status" value="1"/>
</dbReference>
<dbReference type="InterPro" id="IPR029028">
    <property type="entry name" value="Alpha/beta_knot_MTases"/>
</dbReference>
<dbReference type="InterPro" id="IPR003742">
    <property type="entry name" value="RlmH-like"/>
</dbReference>
<dbReference type="InterPro" id="IPR029026">
    <property type="entry name" value="tRNA_m1G_MTases_N"/>
</dbReference>
<dbReference type="NCBIfam" id="NF000985">
    <property type="entry name" value="PRK00103.1-3"/>
    <property type="match status" value="1"/>
</dbReference>
<dbReference type="NCBIfam" id="TIGR00246">
    <property type="entry name" value="tRNA_RlmH_YbeA"/>
    <property type="match status" value="1"/>
</dbReference>
<dbReference type="PANTHER" id="PTHR33603">
    <property type="entry name" value="METHYLTRANSFERASE"/>
    <property type="match status" value="1"/>
</dbReference>
<dbReference type="PANTHER" id="PTHR33603:SF1">
    <property type="entry name" value="RIBOSOMAL RNA LARGE SUBUNIT METHYLTRANSFERASE H"/>
    <property type="match status" value="1"/>
</dbReference>
<dbReference type="Pfam" id="PF02590">
    <property type="entry name" value="SPOUT_MTase"/>
    <property type="match status" value="1"/>
</dbReference>
<dbReference type="PIRSF" id="PIRSF004505">
    <property type="entry name" value="MT_bac"/>
    <property type="match status" value="1"/>
</dbReference>
<dbReference type="SUPFAM" id="SSF75217">
    <property type="entry name" value="alpha/beta knot"/>
    <property type="match status" value="1"/>
</dbReference>
<name>RLMH_CLONN</name>
<proteinExistence type="inferred from homology"/>
<keyword id="KW-0963">Cytoplasm</keyword>
<keyword id="KW-0489">Methyltransferase</keyword>
<keyword id="KW-1185">Reference proteome</keyword>
<keyword id="KW-0698">rRNA processing</keyword>
<keyword id="KW-0949">S-adenosyl-L-methionine</keyword>
<keyword id="KW-0808">Transferase</keyword>
<feature type="chain" id="PRO_1000061776" description="Ribosomal RNA large subunit methyltransferase H">
    <location>
        <begin position="1"/>
        <end position="159"/>
    </location>
</feature>
<feature type="binding site" evidence="1">
    <location>
        <position position="76"/>
    </location>
    <ligand>
        <name>S-adenosyl-L-methionine</name>
        <dbReference type="ChEBI" id="CHEBI:59789"/>
    </ligand>
</feature>
<feature type="binding site" evidence="1">
    <location>
        <position position="108"/>
    </location>
    <ligand>
        <name>S-adenosyl-L-methionine</name>
        <dbReference type="ChEBI" id="CHEBI:59789"/>
    </ligand>
</feature>
<feature type="binding site" evidence="1">
    <location>
        <begin position="127"/>
        <end position="132"/>
    </location>
    <ligand>
        <name>S-adenosyl-L-methionine</name>
        <dbReference type="ChEBI" id="CHEBI:59789"/>
    </ligand>
</feature>
<gene>
    <name evidence="1" type="primary">rlmH</name>
    <name type="ordered locus">NT01CX_0953</name>
</gene>
<organism>
    <name type="scientific">Clostridium novyi (strain NT)</name>
    <dbReference type="NCBI Taxonomy" id="386415"/>
    <lineage>
        <taxon>Bacteria</taxon>
        <taxon>Bacillati</taxon>
        <taxon>Bacillota</taxon>
        <taxon>Clostridia</taxon>
        <taxon>Eubacteriales</taxon>
        <taxon>Clostridiaceae</taxon>
        <taxon>Clostridium</taxon>
    </lineage>
</organism>